<name>YIDC_WOLSU</name>
<protein>
    <recommendedName>
        <fullName evidence="1">Membrane protein insertase YidC</fullName>
    </recommendedName>
    <alternativeName>
        <fullName evidence="1">Foldase YidC</fullName>
    </alternativeName>
    <alternativeName>
        <fullName evidence="1">Membrane integrase YidC</fullName>
    </alternativeName>
    <alternativeName>
        <fullName evidence="1">Membrane protein YidC</fullName>
    </alternativeName>
</protein>
<feature type="chain" id="PRO_0000124770" description="Membrane protein insertase YidC">
    <location>
        <begin position="1"/>
        <end position="536"/>
    </location>
</feature>
<feature type="transmembrane region" description="Helical" evidence="1">
    <location>
        <begin position="14"/>
        <end position="34"/>
    </location>
</feature>
<feature type="transmembrane region" description="Helical" evidence="1">
    <location>
        <begin position="312"/>
        <end position="332"/>
    </location>
</feature>
<feature type="transmembrane region" description="Helical" evidence="1">
    <location>
        <begin position="339"/>
        <end position="359"/>
    </location>
</feature>
<feature type="transmembrane region" description="Helical" evidence="1">
    <location>
        <begin position="401"/>
        <end position="421"/>
    </location>
</feature>
<feature type="transmembrane region" description="Helical" evidence="1">
    <location>
        <begin position="436"/>
        <end position="456"/>
    </location>
</feature>
<feature type="transmembrane region" description="Helical" evidence="1">
    <location>
        <begin position="484"/>
        <end position="504"/>
    </location>
</feature>
<feature type="region of interest" description="Disordered" evidence="2">
    <location>
        <begin position="43"/>
        <end position="69"/>
    </location>
</feature>
<feature type="compositionally biased region" description="Polar residues" evidence="2">
    <location>
        <begin position="53"/>
        <end position="68"/>
    </location>
</feature>
<reference key="1">
    <citation type="journal article" date="2003" name="Proc. Natl. Acad. Sci. U.S.A.">
        <title>Complete genome sequence and analysis of Wolinella succinogenes.</title>
        <authorList>
            <person name="Baar C."/>
            <person name="Eppinger M."/>
            <person name="Raddatz G."/>
            <person name="Simon J."/>
            <person name="Lanz C."/>
            <person name="Klimmek O."/>
            <person name="Nandakumar R."/>
            <person name="Gross R."/>
            <person name="Rosinus A."/>
            <person name="Keller H."/>
            <person name="Jagtap P."/>
            <person name="Linke B."/>
            <person name="Meyer F."/>
            <person name="Lederer H."/>
            <person name="Schuster S.C."/>
        </authorList>
    </citation>
    <scope>NUCLEOTIDE SEQUENCE [LARGE SCALE GENOMIC DNA]</scope>
    <source>
        <strain>ATCC 29543 / DSM 1740 / CCUG 13145 / JCM 31913 / LMG 7466 / NCTC 11488 / FDC 602W</strain>
    </source>
</reference>
<proteinExistence type="inferred from homology"/>
<gene>
    <name evidence="1" type="primary">yidC</name>
    <name type="ordered locus">WS1286</name>
</gene>
<comment type="function">
    <text evidence="1">Required for the insertion and/or proper folding and/or complex formation of integral membrane proteins into the membrane. Involved in integration of membrane proteins that insert both dependently and independently of the Sec translocase complex, as well as at least some lipoproteins. Aids folding of multispanning membrane proteins.</text>
</comment>
<comment type="subunit">
    <text evidence="1">Interacts with the Sec translocase complex via SecD. Specifically interacts with transmembrane segments of nascent integral membrane proteins during membrane integration.</text>
</comment>
<comment type="subcellular location">
    <subcellularLocation>
        <location evidence="1">Cell inner membrane</location>
        <topology evidence="1">Multi-pass membrane protein</topology>
    </subcellularLocation>
</comment>
<comment type="similarity">
    <text evidence="1">Belongs to the OXA1/ALB3/YidC family. Type 1 subfamily.</text>
</comment>
<organism>
    <name type="scientific">Wolinella succinogenes (strain ATCC 29543 / DSM 1740 / CCUG 13145 / JCM 31913 / LMG 7466 / NCTC 11488 / FDC 602W)</name>
    <name type="common">Vibrio succinogenes</name>
    <dbReference type="NCBI Taxonomy" id="273121"/>
    <lineage>
        <taxon>Bacteria</taxon>
        <taxon>Pseudomonadati</taxon>
        <taxon>Campylobacterota</taxon>
        <taxon>Epsilonproteobacteria</taxon>
        <taxon>Campylobacterales</taxon>
        <taxon>Helicobacteraceae</taxon>
        <taxon>Wolinella</taxon>
    </lineage>
</organism>
<evidence type="ECO:0000255" key="1">
    <source>
        <dbReference type="HAMAP-Rule" id="MF_01810"/>
    </source>
</evidence>
<evidence type="ECO:0000256" key="2">
    <source>
        <dbReference type="SAM" id="MobiDB-lite"/>
    </source>
</evidence>
<dbReference type="EMBL" id="BX571660">
    <property type="protein sequence ID" value="CAE10365.1"/>
    <property type="molecule type" value="Genomic_DNA"/>
</dbReference>
<dbReference type="RefSeq" id="WP_011139151.1">
    <property type="nucleotide sequence ID" value="NC_005090.1"/>
</dbReference>
<dbReference type="SMR" id="P60037"/>
<dbReference type="STRING" id="273121.WS1286"/>
<dbReference type="KEGG" id="wsu:WS1286"/>
<dbReference type="eggNOG" id="COG0706">
    <property type="taxonomic scope" value="Bacteria"/>
</dbReference>
<dbReference type="HOGENOM" id="CLU_016535_3_1_7"/>
<dbReference type="Proteomes" id="UP000000422">
    <property type="component" value="Chromosome"/>
</dbReference>
<dbReference type="GO" id="GO:0005886">
    <property type="term" value="C:plasma membrane"/>
    <property type="evidence" value="ECO:0007669"/>
    <property type="project" value="UniProtKB-SubCell"/>
</dbReference>
<dbReference type="GO" id="GO:0032977">
    <property type="term" value="F:membrane insertase activity"/>
    <property type="evidence" value="ECO:0007669"/>
    <property type="project" value="InterPro"/>
</dbReference>
<dbReference type="GO" id="GO:0051205">
    <property type="term" value="P:protein insertion into membrane"/>
    <property type="evidence" value="ECO:0007669"/>
    <property type="project" value="TreeGrafter"/>
</dbReference>
<dbReference type="GO" id="GO:0015031">
    <property type="term" value="P:protein transport"/>
    <property type="evidence" value="ECO:0007669"/>
    <property type="project" value="UniProtKB-KW"/>
</dbReference>
<dbReference type="CDD" id="cd20070">
    <property type="entry name" value="5TM_YidC_Alb3"/>
    <property type="match status" value="1"/>
</dbReference>
<dbReference type="CDD" id="cd19960">
    <property type="entry name" value="YidC_peri"/>
    <property type="match status" value="1"/>
</dbReference>
<dbReference type="Gene3D" id="2.70.98.90">
    <property type="match status" value="1"/>
</dbReference>
<dbReference type="HAMAP" id="MF_01810">
    <property type="entry name" value="YidC_type1"/>
    <property type="match status" value="1"/>
</dbReference>
<dbReference type="InterPro" id="IPR019998">
    <property type="entry name" value="Membr_insert_YidC"/>
</dbReference>
<dbReference type="InterPro" id="IPR028053">
    <property type="entry name" value="Membr_insert_YidC_N"/>
</dbReference>
<dbReference type="InterPro" id="IPR001708">
    <property type="entry name" value="YidC/ALB3/OXA1/COX18"/>
</dbReference>
<dbReference type="InterPro" id="IPR028055">
    <property type="entry name" value="YidC/Oxa/ALB_C"/>
</dbReference>
<dbReference type="InterPro" id="IPR047196">
    <property type="entry name" value="YidC_ALB_C"/>
</dbReference>
<dbReference type="InterPro" id="IPR038221">
    <property type="entry name" value="YidC_periplasmic_sf"/>
</dbReference>
<dbReference type="NCBIfam" id="NF002357">
    <property type="entry name" value="PRK01318.2-4"/>
    <property type="match status" value="1"/>
</dbReference>
<dbReference type="NCBIfam" id="TIGR03593">
    <property type="entry name" value="yidC_nterm"/>
    <property type="match status" value="1"/>
</dbReference>
<dbReference type="NCBIfam" id="TIGR03592">
    <property type="entry name" value="yidC_oxa1_cterm"/>
    <property type="match status" value="1"/>
</dbReference>
<dbReference type="PANTHER" id="PTHR12428:SF65">
    <property type="entry name" value="CYTOCHROME C OXIDASE ASSEMBLY PROTEIN COX18, MITOCHONDRIAL"/>
    <property type="match status" value="1"/>
</dbReference>
<dbReference type="PANTHER" id="PTHR12428">
    <property type="entry name" value="OXA1"/>
    <property type="match status" value="1"/>
</dbReference>
<dbReference type="Pfam" id="PF02096">
    <property type="entry name" value="60KD_IMP"/>
    <property type="match status" value="1"/>
</dbReference>
<dbReference type="Pfam" id="PF14849">
    <property type="entry name" value="YidC_periplas"/>
    <property type="match status" value="1"/>
</dbReference>
<dbReference type="PRINTS" id="PR00701">
    <property type="entry name" value="60KDINNERMP"/>
</dbReference>
<dbReference type="PRINTS" id="PR01900">
    <property type="entry name" value="YIDCPROTEIN"/>
</dbReference>
<keyword id="KW-0997">Cell inner membrane</keyword>
<keyword id="KW-1003">Cell membrane</keyword>
<keyword id="KW-0143">Chaperone</keyword>
<keyword id="KW-0472">Membrane</keyword>
<keyword id="KW-0653">Protein transport</keyword>
<keyword id="KW-1185">Reference proteome</keyword>
<keyword id="KW-0812">Transmembrane</keyword>
<keyword id="KW-1133">Transmembrane helix</keyword>
<keyword id="KW-0813">Transport</keyword>
<accession>P60037</accession>
<sequence length="536" mass="60856">MLDNFDKLNLQMRILIATAISLLFFIPYSYFFAPVKEAPLKESTSMERAEQQAAPQTSSSPKEGQVSSVAMAETSPSKDIIATVQGSHFRLEIDSLGRIAQVYLKDAKFLKEQKELPLLAPLSSLRPLEVRFSDATTNKEAFAKSYYSDRDLVEIRNTPETLTLTQELEGFKLTKKLTFYPDGNYDLEVETSGSQKRFFLSPGARPIAESDKFAFNGVVLKESGGTIHTTEDGDAKKDEIFEGARFVASVDRYYTTLFFVKEPQGLRVVISKNAEKNPEPFVEALDHLKLSGYIGAKDFRLLESIYPSLTDVVEYGFITFFAKPLFLLLDWLYKFCGNWGWAIVLLTLVVRIILFPLTYKGMVSMQKLKDIAPKMKEIQEKYKGDPQKLQVHMMELYKKHGANPMGGCLPLLLQMPIFFAIYRVLYNAIELKGADWILWINDLSVMDPYFILPILMGASMFLQQHLTPTTFTDPMQEKVFKFLPLIFTFFFVTFPSGLVLYWFVSNVFSIAQQLFINKTLEAKKRAAAAKPSGLSD</sequence>